<protein>
    <recommendedName>
        <fullName>Ribonuclease pancreatic</fullName>
        <ecNumber>4.6.1.18</ecNumber>
    </recommendedName>
    <alternativeName>
        <fullName>RNase 1</fullName>
    </alternativeName>
    <alternativeName>
        <fullName>RNase A</fullName>
    </alternativeName>
</protein>
<name>RNAS1_PROGU</name>
<dbReference type="EC" id="4.6.1.18"/>
<dbReference type="PIR" id="A00821">
    <property type="entry name" value="NRKS"/>
</dbReference>
<dbReference type="SMR" id="P04059"/>
<dbReference type="GlyCosmos" id="P04059">
    <property type="glycosylation" value="1 site, No reported glycans"/>
</dbReference>
<dbReference type="iPTMnet" id="P04059"/>
<dbReference type="GO" id="GO:0005576">
    <property type="term" value="C:extracellular region"/>
    <property type="evidence" value="ECO:0007669"/>
    <property type="project" value="UniProtKB-SubCell"/>
</dbReference>
<dbReference type="GO" id="GO:0016829">
    <property type="term" value="F:lyase activity"/>
    <property type="evidence" value="ECO:0007669"/>
    <property type="project" value="UniProtKB-KW"/>
</dbReference>
<dbReference type="GO" id="GO:0003676">
    <property type="term" value="F:nucleic acid binding"/>
    <property type="evidence" value="ECO:0007669"/>
    <property type="project" value="InterPro"/>
</dbReference>
<dbReference type="GO" id="GO:0004522">
    <property type="term" value="F:ribonuclease A activity"/>
    <property type="evidence" value="ECO:0007669"/>
    <property type="project" value="UniProtKB-EC"/>
</dbReference>
<dbReference type="GO" id="GO:0050830">
    <property type="term" value="P:defense response to Gram-positive bacterium"/>
    <property type="evidence" value="ECO:0007669"/>
    <property type="project" value="TreeGrafter"/>
</dbReference>
<dbReference type="CDD" id="cd06265">
    <property type="entry name" value="RNase_A_canonical"/>
    <property type="match status" value="1"/>
</dbReference>
<dbReference type="FunFam" id="3.10.130.10:FF:000001">
    <property type="entry name" value="Ribonuclease pancreatic"/>
    <property type="match status" value="1"/>
</dbReference>
<dbReference type="Gene3D" id="3.10.130.10">
    <property type="entry name" value="Ribonuclease A-like domain"/>
    <property type="match status" value="1"/>
</dbReference>
<dbReference type="InterPro" id="IPR001427">
    <property type="entry name" value="RNaseA"/>
</dbReference>
<dbReference type="InterPro" id="IPR036816">
    <property type="entry name" value="RNaseA-like_dom_sf"/>
</dbReference>
<dbReference type="InterPro" id="IPR023411">
    <property type="entry name" value="RNaseA_AS"/>
</dbReference>
<dbReference type="InterPro" id="IPR023412">
    <property type="entry name" value="RNaseA_domain"/>
</dbReference>
<dbReference type="PANTHER" id="PTHR11437">
    <property type="entry name" value="RIBONUCLEASE"/>
    <property type="match status" value="1"/>
</dbReference>
<dbReference type="PANTHER" id="PTHR11437:SF24">
    <property type="entry name" value="RIBONUCLEASE PANCREATIC"/>
    <property type="match status" value="1"/>
</dbReference>
<dbReference type="Pfam" id="PF00074">
    <property type="entry name" value="RnaseA"/>
    <property type="match status" value="1"/>
</dbReference>
<dbReference type="PRINTS" id="PR00794">
    <property type="entry name" value="RIBONUCLEASE"/>
</dbReference>
<dbReference type="SMART" id="SM00092">
    <property type="entry name" value="RNAse_Pc"/>
    <property type="match status" value="1"/>
</dbReference>
<dbReference type="SUPFAM" id="SSF54076">
    <property type="entry name" value="RNase A-like"/>
    <property type="match status" value="1"/>
</dbReference>
<dbReference type="PROSITE" id="PS00127">
    <property type="entry name" value="RNASE_PANCREATIC"/>
    <property type="match status" value="1"/>
</dbReference>
<evidence type="ECO:0000250" key="1"/>
<evidence type="ECO:0000256" key="2">
    <source>
        <dbReference type="SAM" id="MobiDB-lite"/>
    </source>
</evidence>
<evidence type="ECO:0000269" key="3">
    <source>
    </source>
</evidence>
<evidence type="ECO:0000305" key="4"/>
<gene>
    <name type="primary">RNASE1</name>
    <name type="synonym">RNS1</name>
</gene>
<feature type="chain" id="PRO_0000057212" description="Ribonuclease pancreatic">
    <location>
        <begin position="1"/>
        <end position="128"/>
    </location>
</feature>
<feature type="region of interest" description="Disordered" evidence="2">
    <location>
        <begin position="1"/>
        <end position="25"/>
    </location>
</feature>
<feature type="compositionally biased region" description="Polar residues" evidence="2">
    <location>
        <begin position="14"/>
        <end position="25"/>
    </location>
</feature>
<feature type="active site" description="Proton acceptor" evidence="1">
    <location>
        <position position="12"/>
    </location>
</feature>
<feature type="active site" description="Proton donor" evidence="1">
    <location>
        <position position="119"/>
    </location>
</feature>
<feature type="binding site" evidence="1">
    <location>
        <position position="7"/>
    </location>
    <ligand>
        <name>substrate</name>
    </ligand>
</feature>
<feature type="binding site" evidence="1">
    <location>
        <position position="10"/>
    </location>
    <ligand>
        <name>substrate</name>
    </ligand>
</feature>
<feature type="binding site" evidence="1">
    <location>
        <begin position="41"/>
        <end position="45"/>
    </location>
    <ligand>
        <name>substrate</name>
    </ligand>
</feature>
<feature type="binding site" evidence="1">
    <location>
        <position position="66"/>
    </location>
    <ligand>
        <name>substrate</name>
    </ligand>
</feature>
<feature type="binding site" evidence="1">
    <location>
        <position position="85"/>
    </location>
    <ligand>
        <name>substrate</name>
    </ligand>
</feature>
<feature type="glycosylation site" description="N-linked (GlcNAc...) asparagine" evidence="3">
    <location>
        <position position="34"/>
    </location>
</feature>
<feature type="disulfide bond" evidence="1">
    <location>
        <begin position="26"/>
        <end position="84"/>
    </location>
</feature>
<feature type="disulfide bond" evidence="1">
    <location>
        <begin position="40"/>
        <end position="95"/>
    </location>
</feature>
<feature type="disulfide bond" evidence="1">
    <location>
        <begin position="58"/>
        <end position="110"/>
    </location>
</feature>
<feature type="disulfide bond" evidence="1">
    <location>
        <begin position="65"/>
        <end position="72"/>
    </location>
</feature>
<comment type="function">
    <text evidence="1">Endonuclease that catalyzes the cleavage of RNA on the 3' side of pyrimidine nucleotides. Acts on single-stranded and double-stranded RNA (By similarity).</text>
</comment>
<comment type="catalytic activity">
    <reaction>
        <text>an [RNA] containing cytidine + H2O = an [RNA]-3'-cytidine-3'-phosphate + a 5'-hydroxy-ribonucleotide-3'-[RNA].</text>
        <dbReference type="EC" id="4.6.1.18"/>
    </reaction>
</comment>
<comment type="catalytic activity">
    <reaction>
        <text>an [RNA] containing uridine + H2O = an [RNA]-3'-uridine-3'-phosphate + a 5'-hydroxy-ribonucleotide-3'-[RNA].</text>
        <dbReference type="EC" id="4.6.1.18"/>
    </reaction>
</comment>
<comment type="subunit">
    <text evidence="1">Monomer. Interacts with and forms tight 1:1 complexes with RNH1. Dimerization of two such complexes may occur. Interaction with RNH1 inhibits this protein (By similarity).</text>
</comment>
<comment type="subcellular location">
    <subcellularLocation>
        <location>Secreted</location>
    </subcellularLocation>
</comment>
<comment type="tissue specificity">
    <text>Pancreas.</text>
</comment>
<comment type="similarity">
    <text evidence="4">Belongs to the pancreatic ribonuclease family.</text>
</comment>
<sequence length="128" mass="14244">KESSAKKFQRQHIDSSGSPSTNPNYCNAMMKSRNMTQERCKPVNTFVHEPLADVQAVCFQKNVPCKNGQSNCYESTSNMHITDCRLTSNSKFPDCLYRTSQEEKSIIVACEGNPYVPVHFDASVAASA</sequence>
<proteinExistence type="evidence at protein level"/>
<reference key="1">
    <citation type="journal article" date="1982" name="Biochim. Biophys. Acta">
        <title>The primary structures of pancreatic ribonucleases from African porcupine and casiragua, two hystricomorph rodent species.</title>
        <authorList>
            <person name="Beintema J.J."/>
            <person name="Knol G."/>
            <person name="Martena B."/>
        </authorList>
    </citation>
    <scope>PROTEIN SEQUENCE</scope>
    <scope>GLYCOSYLATION AT ASN-34</scope>
    <source>
        <tissue>Pancreas</tissue>
    </source>
</reference>
<keyword id="KW-0903">Direct protein sequencing</keyword>
<keyword id="KW-1015">Disulfide bond</keyword>
<keyword id="KW-0255">Endonuclease</keyword>
<keyword id="KW-0325">Glycoprotein</keyword>
<keyword id="KW-0378">Hydrolase</keyword>
<keyword id="KW-0456">Lyase</keyword>
<keyword id="KW-0540">Nuclease</keyword>
<keyword id="KW-0964">Secreted</keyword>
<accession>P04059</accession>
<organism>
    <name type="scientific">Proechimys guairae</name>
    <name type="common">Guaira spiny rat</name>
    <dbReference type="NCBI Taxonomy" id="10163"/>
    <lineage>
        <taxon>Eukaryota</taxon>
        <taxon>Metazoa</taxon>
        <taxon>Chordata</taxon>
        <taxon>Craniata</taxon>
        <taxon>Vertebrata</taxon>
        <taxon>Euteleostomi</taxon>
        <taxon>Mammalia</taxon>
        <taxon>Eutheria</taxon>
        <taxon>Euarchontoglires</taxon>
        <taxon>Glires</taxon>
        <taxon>Rodentia</taxon>
        <taxon>Hystricomorpha</taxon>
        <taxon>Echimyidae</taxon>
        <taxon>Proechimys</taxon>
    </lineage>
</organism>